<accession>Q9SXF8</accession>
<accession>B7ESS8</accession>
<accession>O80424</accession>
<accession>Q0DWA8</accession>
<accession>Q6K9X6</accession>
<reference key="1">
    <citation type="submission" date="1999-06" db="EMBL/GenBank/DDBJ databases">
        <title>Rice water channel-3 (rwc3) gene, promoter region.</title>
        <authorList>
            <person name="Li L."/>
            <person name="Tao Y."/>
            <person name="Kitagawa Y."/>
        </authorList>
    </citation>
    <scope>NUCLEOTIDE SEQUENCE [GENOMIC DNA]</scope>
    <source>
        <tissue>Seedling</tissue>
    </source>
</reference>
<reference key="2">
    <citation type="journal article" date="2005" name="Nature">
        <title>The map-based sequence of the rice genome.</title>
        <authorList>
            <consortium name="International rice genome sequencing project (IRGSP)"/>
        </authorList>
    </citation>
    <scope>NUCLEOTIDE SEQUENCE [LARGE SCALE GENOMIC DNA]</scope>
    <source>
        <strain>cv. Nipponbare</strain>
    </source>
</reference>
<reference key="3">
    <citation type="journal article" date="2008" name="Nucleic Acids Res.">
        <title>The rice annotation project database (RAP-DB): 2008 update.</title>
        <authorList>
            <consortium name="The rice annotation project (RAP)"/>
        </authorList>
    </citation>
    <scope>GENOME REANNOTATION</scope>
    <source>
        <strain>cv. Nipponbare</strain>
    </source>
</reference>
<reference key="4">
    <citation type="journal article" date="2013" name="Rice">
        <title>Improvement of the Oryza sativa Nipponbare reference genome using next generation sequence and optical map data.</title>
        <authorList>
            <person name="Kawahara Y."/>
            <person name="de la Bastide M."/>
            <person name="Hamilton J.P."/>
            <person name="Kanamori H."/>
            <person name="McCombie W.R."/>
            <person name="Ouyang S."/>
            <person name="Schwartz D.C."/>
            <person name="Tanaka T."/>
            <person name="Wu J."/>
            <person name="Zhou S."/>
            <person name="Childs K.L."/>
            <person name="Davidson R.M."/>
            <person name="Lin H."/>
            <person name="Quesada-Ocampo L."/>
            <person name="Vaillancourt B."/>
            <person name="Sakai H."/>
            <person name="Lee S.S."/>
            <person name="Kim J."/>
            <person name="Numa H."/>
            <person name="Itoh T."/>
            <person name="Buell C.R."/>
            <person name="Matsumoto T."/>
        </authorList>
    </citation>
    <scope>GENOME REANNOTATION</scope>
    <source>
        <strain>cv. Nipponbare</strain>
    </source>
</reference>
<reference key="5">
    <citation type="journal article" date="2005" name="PLoS Biol.">
        <title>The genomes of Oryza sativa: a history of duplications.</title>
        <authorList>
            <person name="Yu J."/>
            <person name="Wang J."/>
            <person name="Lin W."/>
            <person name="Li S."/>
            <person name="Li H."/>
            <person name="Zhou J."/>
            <person name="Ni P."/>
            <person name="Dong W."/>
            <person name="Hu S."/>
            <person name="Zeng C."/>
            <person name="Zhang J."/>
            <person name="Zhang Y."/>
            <person name="Li R."/>
            <person name="Xu Z."/>
            <person name="Li S."/>
            <person name="Li X."/>
            <person name="Zheng H."/>
            <person name="Cong L."/>
            <person name="Lin L."/>
            <person name="Yin J."/>
            <person name="Geng J."/>
            <person name="Li G."/>
            <person name="Shi J."/>
            <person name="Liu J."/>
            <person name="Lv H."/>
            <person name="Li J."/>
            <person name="Wang J."/>
            <person name="Deng Y."/>
            <person name="Ran L."/>
            <person name="Shi X."/>
            <person name="Wang X."/>
            <person name="Wu Q."/>
            <person name="Li C."/>
            <person name="Ren X."/>
            <person name="Wang J."/>
            <person name="Wang X."/>
            <person name="Li D."/>
            <person name="Liu D."/>
            <person name="Zhang X."/>
            <person name="Ji Z."/>
            <person name="Zhao W."/>
            <person name="Sun Y."/>
            <person name="Zhang Z."/>
            <person name="Bao J."/>
            <person name="Han Y."/>
            <person name="Dong L."/>
            <person name="Ji J."/>
            <person name="Chen P."/>
            <person name="Wu S."/>
            <person name="Liu J."/>
            <person name="Xiao Y."/>
            <person name="Bu D."/>
            <person name="Tan J."/>
            <person name="Yang L."/>
            <person name="Ye C."/>
            <person name="Zhang J."/>
            <person name="Xu J."/>
            <person name="Zhou Y."/>
            <person name="Yu Y."/>
            <person name="Zhang B."/>
            <person name="Zhuang S."/>
            <person name="Wei H."/>
            <person name="Liu B."/>
            <person name="Lei M."/>
            <person name="Yu H."/>
            <person name="Li Y."/>
            <person name="Xu H."/>
            <person name="Wei S."/>
            <person name="He X."/>
            <person name="Fang L."/>
            <person name="Zhang Z."/>
            <person name="Zhang Y."/>
            <person name="Huang X."/>
            <person name="Su Z."/>
            <person name="Tong W."/>
            <person name="Li J."/>
            <person name="Tong Z."/>
            <person name="Li S."/>
            <person name="Ye J."/>
            <person name="Wang L."/>
            <person name="Fang L."/>
            <person name="Lei T."/>
            <person name="Chen C.-S."/>
            <person name="Chen H.-C."/>
            <person name="Xu Z."/>
            <person name="Li H."/>
            <person name="Huang H."/>
            <person name="Zhang F."/>
            <person name="Xu H."/>
            <person name="Li N."/>
            <person name="Zhao C."/>
            <person name="Li S."/>
            <person name="Dong L."/>
            <person name="Huang Y."/>
            <person name="Li L."/>
            <person name="Xi Y."/>
            <person name="Qi Q."/>
            <person name="Li W."/>
            <person name="Zhang B."/>
            <person name="Hu W."/>
            <person name="Zhang Y."/>
            <person name="Tian X."/>
            <person name="Jiao Y."/>
            <person name="Liang X."/>
            <person name="Jin J."/>
            <person name="Gao L."/>
            <person name="Zheng W."/>
            <person name="Hao B."/>
            <person name="Liu S.-M."/>
            <person name="Wang W."/>
            <person name="Yuan L."/>
            <person name="Cao M."/>
            <person name="McDermott J."/>
            <person name="Samudrala R."/>
            <person name="Wang J."/>
            <person name="Wong G.K.-S."/>
            <person name="Yang H."/>
        </authorList>
    </citation>
    <scope>NUCLEOTIDE SEQUENCE [LARGE SCALE GENOMIC DNA]</scope>
    <source>
        <strain>cv. Nipponbare</strain>
    </source>
</reference>
<reference key="6">
    <citation type="journal article" date="2003" name="Science">
        <title>Collection, mapping, and annotation of over 28,000 cDNA clones from japonica rice.</title>
        <authorList>
            <consortium name="The rice full-length cDNA consortium"/>
        </authorList>
    </citation>
    <scope>NUCLEOTIDE SEQUENCE [LARGE SCALE MRNA]</scope>
    <source>
        <strain>cv. Nipponbare</strain>
    </source>
</reference>
<reference key="7">
    <citation type="journal article" date="2004" name="Plant Cell Physiol.">
        <title>The role of aquaporin RWC3 in drought avoidance in rice.</title>
        <authorList>
            <person name="Lian H.-L."/>
            <person name="Yu X."/>
            <person name="Ye Q."/>
            <person name="Ding X.-S."/>
            <person name="Kitagawa Y."/>
            <person name="Kwak S.-S."/>
            <person name="Su W.-A."/>
            <person name="Tang Z.-C."/>
        </authorList>
    </citation>
    <scope>FUNCTION</scope>
    <scope>INDUCTION</scope>
</reference>
<reference key="8">
    <citation type="journal article" date="2004" name="Plant Cell Physiol.">
        <authorList>
            <person name="Lian H.-L."/>
            <person name="Yu X."/>
            <person name="Ye Q."/>
            <person name="Ding X.-S."/>
            <person name="Kitagawa Y."/>
            <person name="Kwak S.-S."/>
            <person name="Su W.-A."/>
            <person name="Tang Z.-C."/>
        </authorList>
    </citation>
    <scope>ERRATUM OF PUBMED:15111723</scope>
</reference>
<reference key="9">
    <citation type="journal article" date="2005" name="Plant Cell Physiol.">
        <title>Identification of 33 rice aquaporin genes and analysis of their expression and function.</title>
        <authorList>
            <person name="Sakurai J."/>
            <person name="Ishikawa F."/>
            <person name="Yamaguchi T."/>
            <person name="Uemura M."/>
            <person name="Maeshima M."/>
        </authorList>
    </citation>
    <scope>NOMENCLATURE</scope>
    <scope>TISSUE SPECIFICITY</scope>
    <scope>INDUCTION</scope>
</reference>
<dbReference type="EMBL" id="AB016623">
    <property type="protein sequence ID" value="BAA32081.1"/>
    <property type="molecule type" value="Genomic_DNA"/>
</dbReference>
<dbReference type="EMBL" id="AB029325">
    <property type="protein sequence ID" value="BAA81820.1"/>
    <property type="molecule type" value="Genomic_DNA"/>
</dbReference>
<dbReference type="EMBL" id="AP004026">
    <property type="protein sequence ID" value="BAD22920.1"/>
    <property type="molecule type" value="Genomic_DNA"/>
</dbReference>
<dbReference type="EMBL" id="AP008208">
    <property type="protein sequence ID" value="BAF10480.1"/>
    <property type="molecule type" value="Genomic_DNA"/>
</dbReference>
<dbReference type="EMBL" id="AP014958">
    <property type="protein sequence ID" value="BAS81656.1"/>
    <property type="molecule type" value="Genomic_DNA"/>
</dbReference>
<dbReference type="EMBL" id="CM000139">
    <property type="protein sequence ID" value="EAZ25130.1"/>
    <property type="molecule type" value="Genomic_DNA"/>
</dbReference>
<dbReference type="EMBL" id="AK102174">
    <property type="protein sequence ID" value="BAG95425.1"/>
    <property type="molecule type" value="mRNA"/>
</dbReference>
<dbReference type="RefSeq" id="XP_015625572.1">
    <property type="nucleotide sequence ID" value="XM_015770086.1"/>
</dbReference>
<dbReference type="SMR" id="Q9SXF8"/>
<dbReference type="FunCoup" id="Q9SXF8">
    <property type="interactions" value="331"/>
</dbReference>
<dbReference type="STRING" id="39947.Q9SXF8"/>
<dbReference type="PaxDb" id="39947-Q9SXF8"/>
<dbReference type="EnsemblPlants" id="Os02t0823100-01">
    <property type="protein sequence ID" value="Os02t0823100-01"/>
    <property type="gene ID" value="Os02g0823100"/>
</dbReference>
<dbReference type="Gramene" id="Os02t0823100-01">
    <property type="protein sequence ID" value="Os02t0823100-01"/>
    <property type="gene ID" value="Os02g0823100"/>
</dbReference>
<dbReference type="KEGG" id="dosa:Os02g0823100"/>
<dbReference type="eggNOG" id="KOG0223">
    <property type="taxonomic scope" value="Eukaryota"/>
</dbReference>
<dbReference type="HOGENOM" id="CLU_020019_3_0_1"/>
<dbReference type="InParanoid" id="Q9SXF8"/>
<dbReference type="OMA" id="WDPVNKE"/>
<dbReference type="OrthoDB" id="606627at2759"/>
<dbReference type="Proteomes" id="UP000000763">
    <property type="component" value="Chromosome 2"/>
</dbReference>
<dbReference type="Proteomes" id="UP000007752">
    <property type="component" value="Chromosome 2"/>
</dbReference>
<dbReference type="Proteomes" id="UP000059680">
    <property type="component" value="Chromosome 2"/>
</dbReference>
<dbReference type="GO" id="GO:0005886">
    <property type="term" value="C:plasma membrane"/>
    <property type="evidence" value="ECO:0000318"/>
    <property type="project" value="GO_Central"/>
</dbReference>
<dbReference type="GO" id="GO:0015250">
    <property type="term" value="F:water channel activity"/>
    <property type="evidence" value="ECO:0000318"/>
    <property type="project" value="GO_Central"/>
</dbReference>
<dbReference type="GO" id="GO:0009414">
    <property type="term" value="P:response to water deprivation"/>
    <property type="evidence" value="ECO:0000318"/>
    <property type="project" value="GO_Central"/>
</dbReference>
<dbReference type="CDD" id="cd00333">
    <property type="entry name" value="MIP"/>
    <property type="match status" value="1"/>
</dbReference>
<dbReference type="FunFam" id="1.20.1080.10:FF:000001">
    <property type="entry name" value="Probable aquaporin PIP1-2"/>
    <property type="match status" value="1"/>
</dbReference>
<dbReference type="Gene3D" id="1.20.1080.10">
    <property type="entry name" value="Glycerol uptake facilitator protein"/>
    <property type="match status" value="1"/>
</dbReference>
<dbReference type="InterPro" id="IPR023271">
    <property type="entry name" value="Aquaporin-like"/>
</dbReference>
<dbReference type="InterPro" id="IPR034294">
    <property type="entry name" value="Aquaporin_transptr"/>
</dbReference>
<dbReference type="InterPro" id="IPR000425">
    <property type="entry name" value="MIP"/>
</dbReference>
<dbReference type="InterPro" id="IPR022357">
    <property type="entry name" value="MIP_CS"/>
</dbReference>
<dbReference type="NCBIfam" id="TIGR00861">
    <property type="entry name" value="MIP"/>
    <property type="match status" value="1"/>
</dbReference>
<dbReference type="PANTHER" id="PTHR45687">
    <property type="entry name" value="AQUAPORIN OR AQUAGLYCEROPORIN RELATED"/>
    <property type="match status" value="1"/>
</dbReference>
<dbReference type="Pfam" id="PF00230">
    <property type="entry name" value="MIP"/>
    <property type="match status" value="1"/>
</dbReference>
<dbReference type="PRINTS" id="PR00783">
    <property type="entry name" value="MINTRINSICP"/>
</dbReference>
<dbReference type="SUPFAM" id="SSF81338">
    <property type="entry name" value="Aquaporin-like"/>
    <property type="match status" value="1"/>
</dbReference>
<dbReference type="PROSITE" id="PS00221">
    <property type="entry name" value="MIP"/>
    <property type="match status" value="1"/>
</dbReference>
<name>PIP13_ORYSJ</name>
<gene>
    <name type="primary">PIP1-3</name>
    <name type="synonym">RWC3</name>
    <name type="ordered locus">Os02g0823100</name>
    <name type="ordered locus">LOC_Os02g57720</name>
    <name type="ORF">OJ1136_C04.6</name>
    <name type="ORF">OsJ_008613</name>
</gene>
<feature type="chain" id="PRO_0000064033" description="Aquaporin PIP 1-3">
    <location>
        <begin position="1"/>
        <end position="288"/>
    </location>
</feature>
<feature type="transmembrane region" description="Helical; Name=1" evidence="2">
    <location>
        <begin position="57"/>
        <end position="77"/>
    </location>
</feature>
<feature type="transmembrane region" description="Helical; Name=2" evidence="2">
    <location>
        <begin position="92"/>
        <end position="114"/>
    </location>
</feature>
<feature type="transmembrane region" description="Helical; Name=3" evidence="2">
    <location>
        <begin position="135"/>
        <end position="155"/>
    </location>
</feature>
<feature type="transmembrane region" description="Helical; Name=4" evidence="2">
    <location>
        <begin position="177"/>
        <end position="197"/>
    </location>
</feature>
<feature type="transmembrane region" description="Helical; Name=5" evidence="2">
    <location>
        <begin position="211"/>
        <end position="231"/>
    </location>
</feature>
<feature type="transmembrane region" description="Helical; Name=6" evidence="2">
    <location>
        <begin position="259"/>
        <end position="279"/>
    </location>
</feature>
<feature type="region of interest" description="Disordered" evidence="3">
    <location>
        <begin position="1"/>
        <end position="30"/>
    </location>
</feature>
<feature type="short sequence motif" description="NPA 1">
    <location>
        <begin position="116"/>
        <end position="118"/>
    </location>
</feature>
<feature type="short sequence motif" description="NPA 2">
    <location>
        <begin position="237"/>
        <end position="239"/>
    </location>
</feature>
<feature type="sequence conflict" description="In Ref. 1; BAA32081/BAA81820." evidence="6" ref="1">
    <original>PAAPVFEV</original>
    <variation>RRRRCSTA</variation>
    <location>
        <begin position="37"/>
        <end position="44"/>
    </location>
</feature>
<feature type="sequence conflict" description="In Ref. 1; BAA32081." evidence="6" ref="1">
    <original>I</original>
    <variation>M</variation>
    <location>
        <position position="217"/>
    </location>
</feature>
<feature type="sequence conflict" description="In Ref. 1; BAA32081/BAA81820." evidence="6" ref="1">
    <location>
        <position position="218"/>
    </location>
</feature>
<evidence type="ECO:0000250" key="1"/>
<evidence type="ECO:0000255" key="2"/>
<evidence type="ECO:0000256" key="3">
    <source>
        <dbReference type="SAM" id="MobiDB-lite"/>
    </source>
</evidence>
<evidence type="ECO:0000269" key="4">
    <source>
    </source>
</evidence>
<evidence type="ECO:0000269" key="5">
    <source>
    </source>
</evidence>
<evidence type="ECO:0000305" key="6"/>
<keyword id="KW-1003">Cell membrane</keyword>
<keyword id="KW-0472">Membrane</keyword>
<keyword id="KW-1185">Reference proteome</keyword>
<keyword id="KW-0677">Repeat</keyword>
<keyword id="KW-0346">Stress response</keyword>
<keyword id="KW-0812">Transmembrane</keyword>
<keyword id="KW-1133">Transmembrane helix</keyword>
<keyword id="KW-0813">Transport</keyword>
<protein>
    <recommendedName>
        <fullName>Aquaporin PIP 1-3</fullName>
    </recommendedName>
    <alternativeName>
        <fullName>OsPIP1;3</fullName>
    </alternativeName>
    <alternativeName>
        <fullName>Plasma membrane intrinsic protein 1-3</fullName>
    </alternativeName>
    <alternativeName>
        <fullName>Water channel protein RWC3</fullName>
        <shortName>RWC-3</shortName>
    </alternativeName>
</protein>
<sequence>MEGKEEDVRLGANRYTERQPIGTAAQGAEEKDYREPPAAPVFEVEELTSWSFYRAGIAEFVATFLFLYISILTVMGVNKSASKCATVGIQGIAWSFGGMIFALVYCTAGISGGHINPAVTFGLFLARKLSLTRAVFYMAMQCLGAICGAGVVKGFQRGLYMGSGGGANAVNPGYTKGDGLGAEIVGTFVLVYTVFSATDAKRNARDSHVPILAPLPIGFAVFLVHLATIPITGTGINPARSLGAAIVYNRAHAWHDHWIFWVGPFIGAALAAIYHVVVIRAIPFKSRD</sequence>
<proteinExistence type="evidence at transcript level"/>
<comment type="function">
    <text evidence="4">Water channel required to facilitate the transport of water across cell membrane. Increases the capacity for root water uptake under water deficit. May play a role in drought avoidance in upland rice.</text>
</comment>
<comment type="subcellular location">
    <subcellularLocation>
        <location evidence="1">Cell membrane</location>
        <topology evidence="1">Multi-pass membrane protein</topology>
    </subcellularLocation>
</comment>
<comment type="tissue specificity">
    <text evidence="5">Expressed in roots and leaves.</text>
</comment>
<comment type="induction">
    <text evidence="4 5">By water deficit in upland rice. Expression decreased by water deficit in lowland rice. Circadian-regulation. Expression is higher during the light phase than during the dark phase.</text>
</comment>
<comment type="domain">
    <text>Aquaporins contain two tandem repeats each containing three membrane-spanning domains and a pore-forming loop with the signature motif Asn-Pro-Ala (NPA).</text>
</comment>
<comment type="similarity">
    <text evidence="6">Belongs to the MIP/aquaporin (TC 1.A.8) family. PIP (TC 1.A.8.11) subfamily.</text>
</comment>
<organism>
    <name type="scientific">Oryza sativa subsp. japonica</name>
    <name type="common">Rice</name>
    <dbReference type="NCBI Taxonomy" id="39947"/>
    <lineage>
        <taxon>Eukaryota</taxon>
        <taxon>Viridiplantae</taxon>
        <taxon>Streptophyta</taxon>
        <taxon>Embryophyta</taxon>
        <taxon>Tracheophyta</taxon>
        <taxon>Spermatophyta</taxon>
        <taxon>Magnoliopsida</taxon>
        <taxon>Liliopsida</taxon>
        <taxon>Poales</taxon>
        <taxon>Poaceae</taxon>
        <taxon>BOP clade</taxon>
        <taxon>Oryzoideae</taxon>
        <taxon>Oryzeae</taxon>
        <taxon>Oryzinae</taxon>
        <taxon>Oryza</taxon>
        <taxon>Oryza sativa</taxon>
    </lineage>
</organism>